<organism>
    <name type="scientific">Schizosaccharomyces pombe (strain 972 / ATCC 24843)</name>
    <name type="common">Fission yeast</name>
    <dbReference type="NCBI Taxonomy" id="284812"/>
    <lineage>
        <taxon>Eukaryota</taxon>
        <taxon>Fungi</taxon>
        <taxon>Dikarya</taxon>
        <taxon>Ascomycota</taxon>
        <taxon>Taphrinomycotina</taxon>
        <taxon>Schizosaccharomycetes</taxon>
        <taxon>Schizosaccharomycetales</taxon>
        <taxon>Schizosaccharomycetaceae</taxon>
        <taxon>Schizosaccharomyces</taxon>
    </lineage>
</organism>
<name>CBH2_SCHPO</name>
<evidence type="ECO:0000255" key="1"/>
<evidence type="ECO:0000255" key="2">
    <source>
        <dbReference type="PROSITE-ProRule" id="PRU00583"/>
    </source>
</evidence>
<evidence type="ECO:0000269" key="3">
    <source>
    </source>
</evidence>
<feature type="chain" id="PRO_0000126135" description="CENP-B homolog protein 2">
    <location>
        <begin position="1"/>
        <end position="514"/>
    </location>
</feature>
<feature type="domain" description="HTH CENPB-type" evidence="2">
    <location>
        <begin position="70"/>
        <end position="145"/>
    </location>
</feature>
<feature type="domain" description="DDE-1" evidence="1">
    <location>
        <begin position="172"/>
        <end position="384"/>
    </location>
</feature>
<keyword id="KW-0137">Centromere</keyword>
<keyword id="KW-0158">Chromosome</keyword>
<keyword id="KW-0238">DNA-binding</keyword>
<keyword id="KW-0539">Nucleus</keyword>
<keyword id="KW-1185">Reference proteome</keyword>
<gene>
    <name type="primary">cbh2</name>
    <name type="ORF">SPBC14F5.12c</name>
</gene>
<sequence>MPPLRRQALTLAEKKAIRKHYFESATKPSQQELISWFEEHFHKKLAQSTVSSILSSKNEFLDNLDAENSQIRRNRQGKYPILENALIDWQTRLQKQDGAITGNAIKKSAAELWRRIPEYSELPIPEFSNGWLEKFKKRCLKHGLKLQGESTSVNQGTYEENMVQIQELISLFDPKDIFNMDETGLCWKLIPNQSPASERVKGITRDKARVTVTICCNATGSEKAPLWVIGYAKSPRAFRQANAHPDSMDFHWRYNGTARMTTSIMEEWLRWFDDLMKGRKVLLILDKFVAHECALENIRNSERKLVNTTVVFLPVNSTEIYHPCGQEIVYAFKSYYRKYWLNYMLEEIRLGKNPSKTMNVLKAVRWMIRSWNVDFEPSIIYNCFLRSGLFQNQQPLTGPSPETIRIAVNLQELIGKYLGDKDIFQIENFINPIEENSADTNDDIVNQVAAQFLDEREFETDEEEEESQYLLSTKDAINAINTLLNFQEQSEDGNVLFTRTLLQFQKVLESRSIV</sequence>
<comment type="function">
    <text evidence="3">Binds to the central core and core-associated repeat regions of centromeric heterochromatin.</text>
</comment>
<comment type="subcellular location">
    <subcellularLocation>
        <location evidence="2 3">Nucleus</location>
    </subcellularLocation>
    <subcellularLocation>
        <location evidence="3">Chromosome</location>
        <location evidence="3">Centromere</location>
    </subcellularLocation>
</comment>
<proteinExistence type="inferred from homology"/>
<dbReference type="EMBL" id="CU329671">
    <property type="protein sequence ID" value="CAA19330.1"/>
    <property type="molecule type" value="Genomic_DNA"/>
</dbReference>
<dbReference type="PIR" id="T39458">
    <property type="entry name" value="T39458"/>
</dbReference>
<dbReference type="RefSeq" id="NP_596738.1">
    <property type="nucleotide sequence ID" value="NM_001022664.2"/>
</dbReference>
<dbReference type="SMR" id="O60108"/>
<dbReference type="BioGRID" id="276280">
    <property type="interactions" value="35"/>
</dbReference>
<dbReference type="FunCoup" id="O60108">
    <property type="interactions" value="288"/>
</dbReference>
<dbReference type="IntAct" id="O60108">
    <property type="interactions" value="2"/>
</dbReference>
<dbReference type="STRING" id="284812.O60108"/>
<dbReference type="iPTMnet" id="O60108"/>
<dbReference type="PaxDb" id="4896-SPBC14F5.12c.1"/>
<dbReference type="EnsemblFungi" id="SPBC14F5.12c.1">
    <property type="protein sequence ID" value="SPBC14F5.12c.1:pep"/>
    <property type="gene ID" value="SPBC14F5.12c"/>
</dbReference>
<dbReference type="GeneID" id="2539728"/>
<dbReference type="KEGG" id="spo:2539728"/>
<dbReference type="PomBase" id="SPBC14F5.12c">
    <property type="gene designation" value="cbh2"/>
</dbReference>
<dbReference type="VEuPathDB" id="FungiDB:SPBC14F5.12c"/>
<dbReference type="eggNOG" id="KOG3105">
    <property type="taxonomic scope" value="Eukaryota"/>
</dbReference>
<dbReference type="HOGENOM" id="CLU_018294_0_3_1"/>
<dbReference type="InParanoid" id="O60108"/>
<dbReference type="OMA" id="PGLCHVR"/>
<dbReference type="PhylomeDB" id="O60108"/>
<dbReference type="PRO" id="PR:O60108"/>
<dbReference type="Proteomes" id="UP000002485">
    <property type="component" value="Chromosome II"/>
</dbReference>
<dbReference type="GO" id="GO:0000775">
    <property type="term" value="C:chromosome, centromeric region"/>
    <property type="evidence" value="ECO:0007669"/>
    <property type="project" value="UniProtKB-SubCell"/>
</dbReference>
<dbReference type="GO" id="GO:0005634">
    <property type="term" value="C:nucleus"/>
    <property type="evidence" value="ECO:0000318"/>
    <property type="project" value="GO_Central"/>
</dbReference>
<dbReference type="GO" id="GO:0003677">
    <property type="term" value="F:DNA binding"/>
    <property type="evidence" value="ECO:0000318"/>
    <property type="project" value="GO_Central"/>
</dbReference>
<dbReference type="Gene3D" id="1.10.10.60">
    <property type="entry name" value="Homeodomain-like"/>
    <property type="match status" value="2"/>
</dbReference>
<dbReference type="InterPro" id="IPR050863">
    <property type="entry name" value="CenT-Element_Derived"/>
</dbReference>
<dbReference type="InterPro" id="IPR004875">
    <property type="entry name" value="DDE_SF_endonuclease_dom"/>
</dbReference>
<dbReference type="InterPro" id="IPR009057">
    <property type="entry name" value="Homeodomain-like_sf"/>
</dbReference>
<dbReference type="InterPro" id="IPR041188">
    <property type="entry name" value="HTH_ABP1_N"/>
</dbReference>
<dbReference type="InterPro" id="IPR006600">
    <property type="entry name" value="HTH_CenpB_DNA-bd_dom"/>
</dbReference>
<dbReference type="PANTHER" id="PTHR19303:SF73">
    <property type="entry name" value="PROTEIN PDC2"/>
    <property type="match status" value="1"/>
</dbReference>
<dbReference type="PANTHER" id="PTHR19303">
    <property type="entry name" value="TRANSPOSON"/>
    <property type="match status" value="1"/>
</dbReference>
<dbReference type="Pfam" id="PF03184">
    <property type="entry name" value="DDE_1"/>
    <property type="match status" value="1"/>
</dbReference>
<dbReference type="Pfam" id="PF18107">
    <property type="entry name" value="HTH_ABP1_N"/>
    <property type="match status" value="1"/>
</dbReference>
<dbReference type="Pfam" id="PF03221">
    <property type="entry name" value="HTH_Tnp_Tc5"/>
    <property type="match status" value="1"/>
</dbReference>
<dbReference type="SMART" id="SM00674">
    <property type="entry name" value="CENPB"/>
    <property type="match status" value="1"/>
</dbReference>
<dbReference type="SUPFAM" id="SSF46689">
    <property type="entry name" value="Homeodomain-like"/>
    <property type="match status" value="2"/>
</dbReference>
<dbReference type="PROSITE" id="PS51253">
    <property type="entry name" value="HTH_CENPB"/>
    <property type="match status" value="1"/>
</dbReference>
<protein>
    <recommendedName>
        <fullName>CENP-B homolog protein 2</fullName>
        <shortName>CBHP-2</shortName>
    </recommendedName>
</protein>
<reference key="1">
    <citation type="journal article" date="2002" name="Nature">
        <title>The genome sequence of Schizosaccharomyces pombe.</title>
        <authorList>
            <person name="Wood V."/>
            <person name="Gwilliam R."/>
            <person name="Rajandream M.A."/>
            <person name="Lyne M.H."/>
            <person name="Lyne R."/>
            <person name="Stewart A."/>
            <person name="Sgouros J.G."/>
            <person name="Peat N."/>
            <person name="Hayles J."/>
            <person name="Baker S.G."/>
            <person name="Basham D."/>
            <person name="Bowman S."/>
            <person name="Brooks K."/>
            <person name="Brown D."/>
            <person name="Brown S."/>
            <person name="Chillingworth T."/>
            <person name="Churcher C.M."/>
            <person name="Collins M."/>
            <person name="Connor R."/>
            <person name="Cronin A."/>
            <person name="Davis P."/>
            <person name="Feltwell T."/>
            <person name="Fraser A."/>
            <person name="Gentles S."/>
            <person name="Goble A."/>
            <person name="Hamlin N."/>
            <person name="Harris D.E."/>
            <person name="Hidalgo J."/>
            <person name="Hodgson G."/>
            <person name="Holroyd S."/>
            <person name="Hornsby T."/>
            <person name="Howarth S."/>
            <person name="Huckle E.J."/>
            <person name="Hunt S."/>
            <person name="Jagels K."/>
            <person name="James K.D."/>
            <person name="Jones L."/>
            <person name="Jones M."/>
            <person name="Leather S."/>
            <person name="McDonald S."/>
            <person name="McLean J."/>
            <person name="Mooney P."/>
            <person name="Moule S."/>
            <person name="Mungall K.L."/>
            <person name="Murphy L.D."/>
            <person name="Niblett D."/>
            <person name="Odell C."/>
            <person name="Oliver K."/>
            <person name="O'Neil S."/>
            <person name="Pearson D."/>
            <person name="Quail M.A."/>
            <person name="Rabbinowitsch E."/>
            <person name="Rutherford K.M."/>
            <person name="Rutter S."/>
            <person name="Saunders D."/>
            <person name="Seeger K."/>
            <person name="Sharp S."/>
            <person name="Skelton J."/>
            <person name="Simmonds M.N."/>
            <person name="Squares R."/>
            <person name="Squares S."/>
            <person name="Stevens K."/>
            <person name="Taylor K."/>
            <person name="Taylor R.G."/>
            <person name="Tivey A."/>
            <person name="Walsh S.V."/>
            <person name="Warren T."/>
            <person name="Whitehead S."/>
            <person name="Woodward J.R."/>
            <person name="Volckaert G."/>
            <person name="Aert R."/>
            <person name="Robben J."/>
            <person name="Grymonprez B."/>
            <person name="Weltjens I."/>
            <person name="Vanstreels E."/>
            <person name="Rieger M."/>
            <person name="Schaefer M."/>
            <person name="Mueller-Auer S."/>
            <person name="Gabel C."/>
            <person name="Fuchs M."/>
            <person name="Duesterhoeft A."/>
            <person name="Fritzc C."/>
            <person name="Holzer E."/>
            <person name="Moestl D."/>
            <person name="Hilbert H."/>
            <person name="Borzym K."/>
            <person name="Langer I."/>
            <person name="Beck A."/>
            <person name="Lehrach H."/>
            <person name="Reinhardt R."/>
            <person name="Pohl T.M."/>
            <person name="Eger P."/>
            <person name="Zimmermann W."/>
            <person name="Wedler H."/>
            <person name="Wambutt R."/>
            <person name="Purnelle B."/>
            <person name="Goffeau A."/>
            <person name="Cadieu E."/>
            <person name="Dreano S."/>
            <person name="Gloux S."/>
            <person name="Lelaure V."/>
            <person name="Mottier S."/>
            <person name="Galibert F."/>
            <person name="Aves S.J."/>
            <person name="Xiang Z."/>
            <person name="Hunt C."/>
            <person name="Moore K."/>
            <person name="Hurst S.M."/>
            <person name="Lucas M."/>
            <person name="Rochet M."/>
            <person name="Gaillardin C."/>
            <person name="Tallada V.A."/>
            <person name="Garzon A."/>
            <person name="Thode G."/>
            <person name="Daga R.R."/>
            <person name="Cruzado L."/>
            <person name="Jimenez J."/>
            <person name="Sanchez M."/>
            <person name="del Rey F."/>
            <person name="Benito J."/>
            <person name="Dominguez A."/>
            <person name="Revuelta J.L."/>
            <person name="Moreno S."/>
            <person name="Armstrong J."/>
            <person name="Forsburg S.L."/>
            <person name="Cerutti L."/>
            <person name="Lowe T."/>
            <person name="McCombie W.R."/>
            <person name="Paulsen I."/>
            <person name="Potashkin J."/>
            <person name="Shpakovski G.V."/>
            <person name="Ussery D."/>
            <person name="Barrell B.G."/>
            <person name="Nurse P."/>
        </authorList>
    </citation>
    <scope>NUCLEOTIDE SEQUENCE [LARGE SCALE GENOMIC DNA]</scope>
    <source>
        <strain>972 / ATCC 24843</strain>
    </source>
</reference>
<reference key="2">
    <citation type="journal article" date="2001" name="Genetics">
        <title>Functional redundancies, distinct localizations and interactions among three fission yeast homologs of centromere protein-B.</title>
        <authorList>
            <person name="Irelan J.T."/>
            <person name="Gutkin G.I."/>
            <person name="Clarke L."/>
        </authorList>
    </citation>
    <scope>FUNCTION</scope>
    <scope>SUBCELLULAR LOCATION</scope>
</reference>
<accession>O60108</accession>